<dbReference type="EMBL" id="CU329670">
    <property type="protein sequence ID" value="CAB11678.1"/>
    <property type="molecule type" value="Genomic_DNA"/>
</dbReference>
<dbReference type="PIR" id="T38452">
    <property type="entry name" value="T38452"/>
</dbReference>
<dbReference type="RefSeq" id="NP_594405.1">
    <property type="nucleotide sequence ID" value="NM_001019836.2"/>
</dbReference>
<dbReference type="BioGRID" id="278516">
    <property type="interactions" value="6"/>
</dbReference>
<dbReference type="iPTMnet" id="O13999"/>
<dbReference type="PaxDb" id="4896-SPAC27E2.04c.1"/>
<dbReference type="EnsemblFungi" id="SPAC27E2.04c.1">
    <property type="protein sequence ID" value="SPAC27E2.04c.1:pep"/>
    <property type="gene ID" value="SPAC27E2.04c"/>
</dbReference>
<dbReference type="GeneID" id="2542034"/>
<dbReference type="KEGG" id="spo:2542034"/>
<dbReference type="PomBase" id="SPAC27E2.04c">
    <property type="gene designation" value="mug155"/>
</dbReference>
<dbReference type="VEuPathDB" id="FungiDB:SPAC27E2.04c"/>
<dbReference type="HOGENOM" id="CLU_1448518_0_0_1"/>
<dbReference type="InParanoid" id="O13999"/>
<dbReference type="PRO" id="PR:O13999"/>
<dbReference type="Proteomes" id="UP000002485">
    <property type="component" value="Chromosome I"/>
</dbReference>
<dbReference type="GO" id="GO:0005737">
    <property type="term" value="C:cytoplasm"/>
    <property type="evidence" value="ECO:0007669"/>
    <property type="project" value="UniProtKB-SubCell"/>
</dbReference>
<dbReference type="GO" id="GO:0031965">
    <property type="term" value="C:nuclear membrane"/>
    <property type="evidence" value="ECO:0007669"/>
    <property type="project" value="UniProtKB-SubCell"/>
</dbReference>
<dbReference type="GO" id="GO:0051321">
    <property type="term" value="P:meiotic cell cycle"/>
    <property type="evidence" value="ECO:0007669"/>
    <property type="project" value="UniProtKB-KW"/>
</dbReference>
<comment type="function">
    <text evidence="3">Has a role in meiosis.</text>
</comment>
<comment type="subcellular location">
    <subcellularLocation>
        <location evidence="4">Cytoplasm</location>
    </subcellularLocation>
    <subcellularLocation>
        <location evidence="4">Nucleus membrane</location>
        <topology evidence="4">Multi-pass membrane protein</topology>
    </subcellularLocation>
</comment>
<organism>
    <name type="scientific">Schizosaccharomyces pombe (strain 972 / ATCC 24843)</name>
    <name type="common">Fission yeast</name>
    <dbReference type="NCBI Taxonomy" id="284812"/>
    <lineage>
        <taxon>Eukaryota</taxon>
        <taxon>Fungi</taxon>
        <taxon>Dikarya</taxon>
        <taxon>Ascomycota</taxon>
        <taxon>Taphrinomycotina</taxon>
        <taxon>Schizosaccharomycetes</taxon>
        <taxon>Schizosaccharomycetales</taxon>
        <taxon>Schizosaccharomycetaceae</taxon>
        <taxon>Schizosaccharomyces</taxon>
    </lineage>
</organism>
<sequence length="187" mass="22402">MRPTSGCSKDDTIQKQNRRHNTVDNKQEKLPLSIEIFLNKQINKISFDTIRSKQNCRLKEIYCRLKIRCRLKKKFIKSLSKKIISYHFISFHTIVVLLLLPPFSHLLVLVYPSVFTTAFYHQKWALRLNPCLPTYFFHRQRQCVTLLIRNANENMRARRVNSVMLTKPKQFLFLLEFITLFIFTYCL</sequence>
<name>MU155_SCHPO</name>
<gene>
    <name type="primary">mug155</name>
    <name type="ORF">SPAC27E2.04c</name>
</gene>
<feature type="chain" id="PRO_0000278510" description="Meiotically up-regulated gene 155 protein">
    <location>
        <begin position="1"/>
        <end position="187"/>
    </location>
</feature>
<feature type="transmembrane region" description="Helical" evidence="1">
    <location>
        <begin position="83"/>
        <end position="105"/>
    </location>
</feature>
<feature type="transmembrane region" description="Helical" evidence="1">
    <location>
        <begin position="163"/>
        <end position="183"/>
    </location>
</feature>
<feature type="region of interest" description="Disordered" evidence="2">
    <location>
        <begin position="1"/>
        <end position="24"/>
    </location>
</feature>
<accession>O13999</accession>
<evidence type="ECO:0000255" key="1"/>
<evidence type="ECO:0000256" key="2">
    <source>
        <dbReference type="SAM" id="MobiDB-lite"/>
    </source>
</evidence>
<evidence type="ECO:0000269" key="3">
    <source>
    </source>
</evidence>
<evidence type="ECO:0000269" key="4">
    <source>
    </source>
</evidence>
<reference key="1">
    <citation type="journal article" date="2002" name="Nature">
        <title>The genome sequence of Schizosaccharomyces pombe.</title>
        <authorList>
            <person name="Wood V."/>
            <person name="Gwilliam R."/>
            <person name="Rajandream M.A."/>
            <person name="Lyne M.H."/>
            <person name="Lyne R."/>
            <person name="Stewart A."/>
            <person name="Sgouros J.G."/>
            <person name="Peat N."/>
            <person name="Hayles J."/>
            <person name="Baker S.G."/>
            <person name="Basham D."/>
            <person name="Bowman S."/>
            <person name="Brooks K."/>
            <person name="Brown D."/>
            <person name="Brown S."/>
            <person name="Chillingworth T."/>
            <person name="Churcher C.M."/>
            <person name="Collins M."/>
            <person name="Connor R."/>
            <person name="Cronin A."/>
            <person name="Davis P."/>
            <person name="Feltwell T."/>
            <person name="Fraser A."/>
            <person name="Gentles S."/>
            <person name="Goble A."/>
            <person name="Hamlin N."/>
            <person name="Harris D.E."/>
            <person name="Hidalgo J."/>
            <person name="Hodgson G."/>
            <person name="Holroyd S."/>
            <person name="Hornsby T."/>
            <person name="Howarth S."/>
            <person name="Huckle E.J."/>
            <person name="Hunt S."/>
            <person name="Jagels K."/>
            <person name="James K.D."/>
            <person name="Jones L."/>
            <person name="Jones M."/>
            <person name="Leather S."/>
            <person name="McDonald S."/>
            <person name="McLean J."/>
            <person name="Mooney P."/>
            <person name="Moule S."/>
            <person name="Mungall K.L."/>
            <person name="Murphy L.D."/>
            <person name="Niblett D."/>
            <person name="Odell C."/>
            <person name="Oliver K."/>
            <person name="O'Neil S."/>
            <person name="Pearson D."/>
            <person name="Quail M.A."/>
            <person name="Rabbinowitsch E."/>
            <person name="Rutherford K.M."/>
            <person name="Rutter S."/>
            <person name="Saunders D."/>
            <person name="Seeger K."/>
            <person name="Sharp S."/>
            <person name="Skelton J."/>
            <person name="Simmonds M.N."/>
            <person name="Squares R."/>
            <person name="Squares S."/>
            <person name="Stevens K."/>
            <person name="Taylor K."/>
            <person name="Taylor R.G."/>
            <person name="Tivey A."/>
            <person name="Walsh S.V."/>
            <person name="Warren T."/>
            <person name="Whitehead S."/>
            <person name="Woodward J.R."/>
            <person name="Volckaert G."/>
            <person name="Aert R."/>
            <person name="Robben J."/>
            <person name="Grymonprez B."/>
            <person name="Weltjens I."/>
            <person name="Vanstreels E."/>
            <person name="Rieger M."/>
            <person name="Schaefer M."/>
            <person name="Mueller-Auer S."/>
            <person name="Gabel C."/>
            <person name="Fuchs M."/>
            <person name="Duesterhoeft A."/>
            <person name="Fritzc C."/>
            <person name="Holzer E."/>
            <person name="Moestl D."/>
            <person name="Hilbert H."/>
            <person name="Borzym K."/>
            <person name="Langer I."/>
            <person name="Beck A."/>
            <person name="Lehrach H."/>
            <person name="Reinhardt R."/>
            <person name="Pohl T.M."/>
            <person name="Eger P."/>
            <person name="Zimmermann W."/>
            <person name="Wedler H."/>
            <person name="Wambutt R."/>
            <person name="Purnelle B."/>
            <person name="Goffeau A."/>
            <person name="Cadieu E."/>
            <person name="Dreano S."/>
            <person name="Gloux S."/>
            <person name="Lelaure V."/>
            <person name="Mottier S."/>
            <person name="Galibert F."/>
            <person name="Aves S.J."/>
            <person name="Xiang Z."/>
            <person name="Hunt C."/>
            <person name="Moore K."/>
            <person name="Hurst S.M."/>
            <person name="Lucas M."/>
            <person name="Rochet M."/>
            <person name="Gaillardin C."/>
            <person name="Tallada V.A."/>
            <person name="Garzon A."/>
            <person name="Thode G."/>
            <person name="Daga R.R."/>
            <person name="Cruzado L."/>
            <person name="Jimenez J."/>
            <person name="Sanchez M."/>
            <person name="del Rey F."/>
            <person name="Benito J."/>
            <person name="Dominguez A."/>
            <person name="Revuelta J.L."/>
            <person name="Moreno S."/>
            <person name="Armstrong J."/>
            <person name="Forsburg S.L."/>
            <person name="Cerutti L."/>
            <person name="Lowe T."/>
            <person name="McCombie W.R."/>
            <person name="Paulsen I."/>
            <person name="Potashkin J."/>
            <person name="Shpakovski G.V."/>
            <person name="Ussery D."/>
            <person name="Barrell B.G."/>
            <person name="Nurse P."/>
        </authorList>
    </citation>
    <scope>NUCLEOTIDE SEQUENCE [LARGE SCALE GENOMIC DNA]</scope>
    <source>
        <strain>972 / ATCC 24843</strain>
    </source>
</reference>
<reference key="2">
    <citation type="journal article" date="2005" name="Curr. Biol.">
        <title>A large-scale screen in S. pombe identifies seven novel genes required for critical meiotic events.</title>
        <authorList>
            <person name="Martin-Castellanos C."/>
            <person name="Blanco M."/>
            <person name="Rozalen A.E."/>
            <person name="Perez-Hidalgo L."/>
            <person name="Garcia A.I."/>
            <person name="Conde F."/>
            <person name="Mata J."/>
            <person name="Ellermeier C."/>
            <person name="Davis L."/>
            <person name="San-Segundo P."/>
            <person name="Smith G.R."/>
            <person name="Moreno S."/>
        </authorList>
    </citation>
    <scope>FUNCTION IN MEIOSIS</scope>
</reference>
<reference key="3">
    <citation type="journal article" date="2006" name="Nat. Biotechnol.">
        <title>ORFeome cloning and global analysis of protein localization in the fission yeast Schizosaccharomyces pombe.</title>
        <authorList>
            <person name="Matsuyama A."/>
            <person name="Arai R."/>
            <person name="Yashiroda Y."/>
            <person name="Shirai A."/>
            <person name="Kamata A."/>
            <person name="Sekido S."/>
            <person name="Kobayashi Y."/>
            <person name="Hashimoto A."/>
            <person name="Hamamoto M."/>
            <person name="Hiraoka Y."/>
            <person name="Horinouchi S."/>
            <person name="Yoshida M."/>
        </authorList>
    </citation>
    <scope>SUBCELLULAR LOCATION [LARGE SCALE ANALYSIS]</scope>
</reference>
<protein>
    <recommendedName>
        <fullName>Meiotically up-regulated gene 155 protein</fullName>
    </recommendedName>
</protein>
<keyword id="KW-0963">Cytoplasm</keyword>
<keyword id="KW-0469">Meiosis</keyword>
<keyword id="KW-0472">Membrane</keyword>
<keyword id="KW-0539">Nucleus</keyword>
<keyword id="KW-1185">Reference proteome</keyword>
<keyword id="KW-0812">Transmembrane</keyword>
<keyword id="KW-1133">Transmembrane helix</keyword>
<proteinExistence type="evidence at protein level"/>